<name>CHED2_DECAR</name>
<accession>Q47GY0</accession>
<gene>
    <name evidence="1" type="primary">cheD2</name>
    <name type="ordered locus">Daro_1145</name>
</gene>
<sequence length="197" mass="21712">MDYSKLPSQEIERLARTIHPGAWAIEPERPLATLLGSCVAVCLFDPQARVGGLNHFMLPNIRRGSNDDVDSLLSGAYAMEALLNALLQRGAKKLRLQAKAFGGGTIINTSGPSMSIGLRNAEFTKEWLDREGIPLLASDFLGPWSRKVLFLPMTGDAFCRRMVTNMATAETIAREEKSYADTLAQKPKSTEKKIELF</sequence>
<evidence type="ECO:0000255" key="1">
    <source>
        <dbReference type="HAMAP-Rule" id="MF_01440"/>
    </source>
</evidence>
<dbReference type="EC" id="3.5.1.44" evidence="1"/>
<dbReference type="EMBL" id="CP000089">
    <property type="protein sequence ID" value="AAZ45901.1"/>
    <property type="molecule type" value="Genomic_DNA"/>
</dbReference>
<dbReference type="SMR" id="Q47GY0"/>
<dbReference type="STRING" id="159087.Daro_1145"/>
<dbReference type="KEGG" id="dar:Daro_1145"/>
<dbReference type="eggNOG" id="COG1871">
    <property type="taxonomic scope" value="Bacteria"/>
</dbReference>
<dbReference type="HOGENOM" id="CLU_087854_0_0_4"/>
<dbReference type="OrthoDB" id="9807202at2"/>
<dbReference type="GO" id="GO:0050568">
    <property type="term" value="F:protein-glutamine glutaminase activity"/>
    <property type="evidence" value="ECO:0007669"/>
    <property type="project" value="UniProtKB-UniRule"/>
</dbReference>
<dbReference type="GO" id="GO:0006935">
    <property type="term" value="P:chemotaxis"/>
    <property type="evidence" value="ECO:0007669"/>
    <property type="project" value="UniProtKB-UniRule"/>
</dbReference>
<dbReference type="CDD" id="cd16352">
    <property type="entry name" value="CheD"/>
    <property type="match status" value="1"/>
</dbReference>
<dbReference type="Gene3D" id="3.30.1330.200">
    <property type="match status" value="1"/>
</dbReference>
<dbReference type="HAMAP" id="MF_01440">
    <property type="entry name" value="CheD"/>
    <property type="match status" value="1"/>
</dbReference>
<dbReference type="InterPro" id="IPR038592">
    <property type="entry name" value="CheD-like_sf"/>
</dbReference>
<dbReference type="InterPro" id="IPR005659">
    <property type="entry name" value="Chemorcpt_Glu_NH3ase_CheD"/>
</dbReference>
<dbReference type="InterPro" id="IPR011324">
    <property type="entry name" value="Cytotoxic_necrot_fac-like_cat"/>
</dbReference>
<dbReference type="PANTHER" id="PTHR35147:SF3">
    <property type="entry name" value="CHEMORECEPTOR GLUTAMINE DEAMIDASE CHED 1-RELATED"/>
    <property type="match status" value="1"/>
</dbReference>
<dbReference type="PANTHER" id="PTHR35147">
    <property type="entry name" value="CHEMORECEPTOR GLUTAMINE DEAMIDASE CHED-RELATED"/>
    <property type="match status" value="1"/>
</dbReference>
<dbReference type="Pfam" id="PF03975">
    <property type="entry name" value="CheD"/>
    <property type="match status" value="1"/>
</dbReference>
<dbReference type="SUPFAM" id="SSF64438">
    <property type="entry name" value="CNF1/YfiH-like putative cysteine hydrolases"/>
    <property type="match status" value="1"/>
</dbReference>
<proteinExistence type="inferred from homology"/>
<organism>
    <name type="scientific">Dechloromonas aromatica (strain RCB)</name>
    <dbReference type="NCBI Taxonomy" id="159087"/>
    <lineage>
        <taxon>Bacteria</taxon>
        <taxon>Pseudomonadati</taxon>
        <taxon>Pseudomonadota</taxon>
        <taxon>Betaproteobacteria</taxon>
        <taxon>Rhodocyclales</taxon>
        <taxon>Azonexaceae</taxon>
        <taxon>Dechloromonas</taxon>
    </lineage>
</organism>
<comment type="function">
    <text evidence="1">Probably deamidates glutamine residues to glutamate on methyl-accepting chemotaxis receptors (MCPs), playing an important role in chemotaxis.</text>
</comment>
<comment type="catalytic activity">
    <reaction evidence="1">
        <text>L-glutaminyl-[protein] + H2O = L-glutamyl-[protein] + NH4(+)</text>
        <dbReference type="Rhea" id="RHEA:16441"/>
        <dbReference type="Rhea" id="RHEA-COMP:10207"/>
        <dbReference type="Rhea" id="RHEA-COMP:10208"/>
        <dbReference type="ChEBI" id="CHEBI:15377"/>
        <dbReference type="ChEBI" id="CHEBI:28938"/>
        <dbReference type="ChEBI" id="CHEBI:29973"/>
        <dbReference type="ChEBI" id="CHEBI:30011"/>
        <dbReference type="EC" id="3.5.1.44"/>
    </reaction>
</comment>
<comment type="similarity">
    <text evidence="1">Belongs to the CheD family.</text>
</comment>
<protein>
    <recommendedName>
        <fullName evidence="1">Probable chemoreceptor glutamine deamidase CheD 2</fullName>
        <ecNumber evidence="1">3.5.1.44</ecNumber>
    </recommendedName>
</protein>
<reference key="1">
    <citation type="journal article" date="2009" name="BMC Genomics">
        <title>Metabolic analysis of the soil microbe Dechloromonas aromatica str. RCB: indications of a surprisingly complex life-style and cryptic anaerobic pathways for aromatic degradation.</title>
        <authorList>
            <person name="Salinero K.K."/>
            <person name="Keller K."/>
            <person name="Feil W.S."/>
            <person name="Feil H."/>
            <person name="Trong S."/>
            <person name="Di Bartolo G."/>
            <person name="Lapidus A."/>
        </authorList>
    </citation>
    <scope>NUCLEOTIDE SEQUENCE [LARGE SCALE GENOMIC DNA]</scope>
    <source>
        <strain>RCB</strain>
    </source>
</reference>
<keyword id="KW-0145">Chemotaxis</keyword>
<keyword id="KW-0378">Hydrolase</keyword>
<feature type="chain" id="PRO_0000251027" description="Probable chemoreceptor glutamine deamidase CheD 2">
    <location>
        <begin position="1"/>
        <end position="197"/>
    </location>
</feature>